<organism>
    <name type="scientific">Aster yellows witches'-broom phytoplasma (strain AYWB)</name>
    <dbReference type="NCBI Taxonomy" id="322098"/>
    <lineage>
        <taxon>Bacteria</taxon>
        <taxon>Bacillati</taxon>
        <taxon>Mycoplasmatota</taxon>
        <taxon>Mollicutes</taxon>
        <taxon>Acholeplasmatales</taxon>
        <taxon>Acholeplasmataceae</taxon>
        <taxon>Candidatus Phytoplasma</taxon>
        <taxon>16SrI (Aster yellows group)</taxon>
    </lineage>
</organism>
<protein>
    <recommendedName>
        <fullName evidence="1">Ribosomal RNA small subunit methyltransferase A</fullName>
        <ecNumber evidence="1">2.1.1.182</ecNumber>
    </recommendedName>
    <alternativeName>
        <fullName evidence="1">16S rRNA (adenine(1518)-N(6)/adenine(1519)-N(6))-dimethyltransferase</fullName>
    </alternativeName>
    <alternativeName>
        <fullName evidence="1">16S rRNA dimethyladenosine transferase</fullName>
    </alternativeName>
    <alternativeName>
        <fullName evidence="1">16S rRNA dimethylase</fullName>
    </alternativeName>
    <alternativeName>
        <fullName evidence="1">S-adenosylmethionine-6-N', N'-adenosyl(rRNA) dimethyltransferase</fullName>
    </alternativeName>
</protein>
<accession>Q2NIH8</accession>
<comment type="function">
    <text evidence="1">Specifically dimethylates two adjacent adenosines (A1518 and A1519) in the loop of a conserved hairpin near the 3'-end of 16S rRNA in the 30S particle. May play a critical role in biogenesis of 30S subunits.</text>
</comment>
<comment type="catalytic activity">
    <reaction evidence="1">
        <text>adenosine(1518)/adenosine(1519) in 16S rRNA + 4 S-adenosyl-L-methionine = N(6)-dimethyladenosine(1518)/N(6)-dimethyladenosine(1519) in 16S rRNA + 4 S-adenosyl-L-homocysteine + 4 H(+)</text>
        <dbReference type="Rhea" id="RHEA:19609"/>
        <dbReference type="Rhea" id="RHEA-COMP:10232"/>
        <dbReference type="Rhea" id="RHEA-COMP:10233"/>
        <dbReference type="ChEBI" id="CHEBI:15378"/>
        <dbReference type="ChEBI" id="CHEBI:57856"/>
        <dbReference type="ChEBI" id="CHEBI:59789"/>
        <dbReference type="ChEBI" id="CHEBI:74411"/>
        <dbReference type="ChEBI" id="CHEBI:74493"/>
        <dbReference type="EC" id="2.1.1.182"/>
    </reaction>
</comment>
<comment type="subcellular location">
    <subcellularLocation>
        <location evidence="1">Cytoplasm</location>
    </subcellularLocation>
</comment>
<comment type="similarity">
    <text evidence="1">Belongs to the class I-like SAM-binding methyltransferase superfamily. rRNA adenine N(6)-methyltransferase family. RsmA subfamily.</text>
</comment>
<feature type="chain" id="PRO_0000271900" description="Ribosomal RNA small subunit methyltransferase A">
    <location>
        <begin position="1"/>
        <end position="268"/>
    </location>
</feature>
<feature type="binding site" evidence="1">
    <location>
        <position position="12"/>
    </location>
    <ligand>
        <name>S-adenosyl-L-methionine</name>
        <dbReference type="ChEBI" id="CHEBI:59789"/>
    </ligand>
</feature>
<feature type="binding site" evidence="1">
    <location>
        <position position="14"/>
    </location>
    <ligand>
        <name>S-adenosyl-L-methionine</name>
        <dbReference type="ChEBI" id="CHEBI:59789"/>
    </ligand>
</feature>
<feature type="binding site" evidence="1">
    <location>
        <position position="38"/>
    </location>
    <ligand>
        <name>S-adenosyl-L-methionine</name>
        <dbReference type="ChEBI" id="CHEBI:59789"/>
    </ligand>
</feature>
<feature type="binding site" evidence="1">
    <location>
        <position position="59"/>
    </location>
    <ligand>
        <name>S-adenosyl-L-methionine</name>
        <dbReference type="ChEBI" id="CHEBI:59789"/>
    </ligand>
</feature>
<feature type="binding site" evidence="1">
    <location>
        <position position="82"/>
    </location>
    <ligand>
        <name>S-adenosyl-L-methionine</name>
        <dbReference type="ChEBI" id="CHEBI:59789"/>
    </ligand>
</feature>
<feature type="binding site" evidence="1">
    <location>
        <position position="107"/>
    </location>
    <ligand>
        <name>S-adenosyl-L-methionine</name>
        <dbReference type="ChEBI" id="CHEBI:59789"/>
    </ligand>
</feature>
<dbReference type="EC" id="2.1.1.182" evidence="1"/>
<dbReference type="EMBL" id="CP000061">
    <property type="protein sequence ID" value="ABC65765.1"/>
    <property type="molecule type" value="Genomic_DNA"/>
</dbReference>
<dbReference type="RefSeq" id="WP_011412926.1">
    <property type="nucleotide sequence ID" value="NC_007716.1"/>
</dbReference>
<dbReference type="SMR" id="Q2NIH8"/>
<dbReference type="STRING" id="322098.AYWB_648"/>
<dbReference type="KEGG" id="ayw:AYWB_648"/>
<dbReference type="eggNOG" id="COG0030">
    <property type="taxonomic scope" value="Bacteria"/>
</dbReference>
<dbReference type="HOGENOM" id="CLU_041220_0_0_14"/>
<dbReference type="OrthoDB" id="9814755at2"/>
<dbReference type="PhylomeDB" id="Q2NIH8"/>
<dbReference type="Proteomes" id="UP000001934">
    <property type="component" value="Chromosome"/>
</dbReference>
<dbReference type="GO" id="GO:0005829">
    <property type="term" value="C:cytosol"/>
    <property type="evidence" value="ECO:0007669"/>
    <property type="project" value="TreeGrafter"/>
</dbReference>
<dbReference type="GO" id="GO:0052908">
    <property type="term" value="F:16S rRNA (adenine(1518)-N(6)/adenine(1519)-N(6))-dimethyltransferase activity"/>
    <property type="evidence" value="ECO:0007669"/>
    <property type="project" value="UniProtKB-EC"/>
</dbReference>
<dbReference type="GO" id="GO:0003723">
    <property type="term" value="F:RNA binding"/>
    <property type="evidence" value="ECO:0007669"/>
    <property type="project" value="UniProtKB-KW"/>
</dbReference>
<dbReference type="Gene3D" id="1.10.8.100">
    <property type="entry name" value="Ribosomal RNA adenine dimethylase-like, domain 2"/>
    <property type="match status" value="1"/>
</dbReference>
<dbReference type="Gene3D" id="3.40.50.150">
    <property type="entry name" value="Vaccinia Virus protein VP39"/>
    <property type="match status" value="1"/>
</dbReference>
<dbReference type="HAMAP" id="MF_00607">
    <property type="entry name" value="16SrRNA_methyltr_A"/>
    <property type="match status" value="1"/>
</dbReference>
<dbReference type="InterPro" id="IPR001737">
    <property type="entry name" value="KsgA/Erm"/>
</dbReference>
<dbReference type="InterPro" id="IPR023165">
    <property type="entry name" value="rRNA_Ade_diMease-like_C"/>
</dbReference>
<dbReference type="InterPro" id="IPR020596">
    <property type="entry name" value="rRNA_Ade_Mease_Trfase_CS"/>
</dbReference>
<dbReference type="InterPro" id="IPR020598">
    <property type="entry name" value="rRNA_Ade_methylase_Trfase_N"/>
</dbReference>
<dbReference type="InterPro" id="IPR011530">
    <property type="entry name" value="rRNA_adenine_dimethylase"/>
</dbReference>
<dbReference type="InterPro" id="IPR029063">
    <property type="entry name" value="SAM-dependent_MTases_sf"/>
</dbReference>
<dbReference type="NCBIfam" id="TIGR00755">
    <property type="entry name" value="ksgA"/>
    <property type="match status" value="1"/>
</dbReference>
<dbReference type="PANTHER" id="PTHR11727">
    <property type="entry name" value="DIMETHYLADENOSINE TRANSFERASE"/>
    <property type="match status" value="1"/>
</dbReference>
<dbReference type="PANTHER" id="PTHR11727:SF7">
    <property type="entry name" value="DIMETHYLADENOSINE TRANSFERASE-RELATED"/>
    <property type="match status" value="1"/>
</dbReference>
<dbReference type="Pfam" id="PF00398">
    <property type="entry name" value="RrnaAD"/>
    <property type="match status" value="1"/>
</dbReference>
<dbReference type="SMART" id="SM00650">
    <property type="entry name" value="rADc"/>
    <property type="match status" value="1"/>
</dbReference>
<dbReference type="SUPFAM" id="SSF53335">
    <property type="entry name" value="S-adenosyl-L-methionine-dependent methyltransferases"/>
    <property type="match status" value="1"/>
</dbReference>
<dbReference type="PROSITE" id="PS01131">
    <property type="entry name" value="RRNA_A_DIMETH"/>
    <property type="match status" value="1"/>
</dbReference>
<dbReference type="PROSITE" id="PS51689">
    <property type="entry name" value="SAM_RNA_A_N6_MT"/>
    <property type="match status" value="1"/>
</dbReference>
<evidence type="ECO:0000255" key="1">
    <source>
        <dbReference type="HAMAP-Rule" id="MF_00607"/>
    </source>
</evidence>
<reference key="1">
    <citation type="journal article" date="2006" name="J. Bacteriol.">
        <title>Living with genome instability: the adaptation of phytoplasmas to diverse environments of their insect and plant hosts.</title>
        <authorList>
            <person name="Bai X."/>
            <person name="Zhang J."/>
            <person name="Ewing A."/>
            <person name="Miller S.A."/>
            <person name="Jancso Radek A."/>
            <person name="Shevchenko D.V."/>
            <person name="Tsukerman K."/>
            <person name="Walunas T."/>
            <person name="Lapidus A."/>
            <person name="Campbell J.W."/>
            <person name="Hogenhout S.A."/>
        </authorList>
    </citation>
    <scope>NUCLEOTIDE SEQUENCE [LARGE SCALE GENOMIC DNA]</scope>
    <source>
        <strain>AYWB</strain>
    </source>
</reference>
<sequence>MHHTNKKKYGQNFLTDVNLLNKIVTKASITDKNVLEIGPGKGALTKIIVPQAKNVLAYEIDATLKPFLNFENHNNVNIIYDDFLKRDLLKDFDHYFSPNSQLSLIGNLPYYITSPILFKIIDTPQINDATIMIQKEVGMRLLAQPNNKNYNALSVIIQFLFSIEKIQEVKRHMFFPTPKVDSIVIKLTKNNNILPTFLKQFIKFVKNSFKQKRKTLLNNLSCQFLLSKETIIPFFLQHHIPLQIRAEQVTLETFQKLTVKWFIFLNMS</sequence>
<name>RSMA_AYWBP</name>
<gene>
    <name evidence="1" type="primary">rsmA</name>
    <name evidence="1" type="synonym">ksgA</name>
    <name type="ordered locus">AYWB_648</name>
</gene>
<proteinExistence type="inferred from homology"/>
<keyword id="KW-0963">Cytoplasm</keyword>
<keyword id="KW-0489">Methyltransferase</keyword>
<keyword id="KW-0694">RNA-binding</keyword>
<keyword id="KW-0698">rRNA processing</keyword>
<keyword id="KW-0949">S-adenosyl-L-methionine</keyword>
<keyword id="KW-0808">Transferase</keyword>